<evidence type="ECO:0000255" key="1">
    <source>
        <dbReference type="HAMAP-Rule" id="MF_01210"/>
    </source>
</evidence>
<feature type="chain" id="PRO_0000144983" description="Carbamoyl phosphate synthase large chain">
    <location>
        <begin position="1"/>
        <end position="1104"/>
    </location>
</feature>
<feature type="domain" description="ATP-grasp 1" evidence="1">
    <location>
        <begin position="133"/>
        <end position="329"/>
    </location>
</feature>
<feature type="domain" description="ATP-grasp 2" evidence="1">
    <location>
        <begin position="703"/>
        <end position="900"/>
    </location>
</feature>
<feature type="domain" description="MGS-like" evidence="1">
    <location>
        <begin position="967"/>
        <end position="1104"/>
    </location>
</feature>
<feature type="region of interest" description="Carboxyphosphate synthetic domain" evidence="1">
    <location>
        <begin position="1"/>
        <end position="403"/>
    </location>
</feature>
<feature type="region of interest" description="Oligomerization domain" evidence="1">
    <location>
        <begin position="404"/>
        <end position="552"/>
    </location>
</feature>
<feature type="region of interest" description="Carbamoyl phosphate synthetic domain" evidence="1">
    <location>
        <begin position="553"/>
        <end position="966"/>
    </location>
</feature>
<feature type="region of interest" description="Allosteric domain" evidence="1">
    <location>
        <begin position="967"/>
        <end position="1104"/>
    </location>
</feature>
<feature type="binding site" evidence="1">
    <location>
        <position position="129"/>
    </location>
    <ligand>
        <name>ATP</name>
        <dbReference type="ChEBI" id="CHEBI:30616"/>
        <label>1</label>
    </ligand>
</feature>
<feature type="binding site" evidence="1">
    <location>
        <position position="170"/>
    </location>
    <ligand>
        <name>ATP</name>
        <dbReference type="ChEBI" id="CHEBI:30616"/>
        <label>1</label>
    </ligand>
</feature>
<feature type="binding site" evidence="1">
    <location>
        <position position="176"/>
    </location>
    <ligand>
        <name>ATP</name>
        <dbReference type="ChEBI" id="CHEBI:30616"/>
        <label>1</label>
    </ligand>
</feature>
<feature type="binding site" evidence="1">
    <location>
        <position position="177"/>
    </location>
    <ligand>
        <name>ATP</name>
        <dbReference type="ChEBI" id="CHEBI:30616"/>
        <label>1</label>
    </ligand>
</feature>
<feature type="binding site" evidence="1">
    <location>
        <position position="209"/>
    </location>
    <ligand>
        <name>ATP</name>
        <dbReference type="ChEBI" id="CHEBI:30616"/>
        <label>1</label>
    </ligand>
</feature>
<feature type="binding site" evidence="1">
    <location>
        <position position="211"/>
    </location>
    <ligand>
        <name>ATP</name>
        <dbReference type="ChEBI" id="CHEBI:30616"/>
        <label>1</label>
    </ligand>
</feature>
<feature type="binding site" evidence="1">
    <location>
        <position position="216"/>
    </location>
    <ligand>
        <name>ATP</name>
        <dbReference type="ChEBI" id="CHEBI:30616"/>
        <label>1</label>
    </ligand>
</feature>
<feature type="binding site" evidence="1">
    <location>
        <position position="242"/>
    </location>
    <ligand>
        <name>ATP</name>
        <dbReference type="ChEBI" id="CHEBI:30616"/>
        <label>1</label>
    </ligand>
</feature>
<feature type="binding site" evidence="1">
    <location>
        <position position="243"/>
    </location>
    <ligand>
        <name>ATP</name>
        <dbReference type="ChEBI" id="CHEBI:30616"/>
        <label>1</label>
    </ligand>
</feature>
<feature type="binding site" evidence="1">
    <location>
        <position position="244"/>
    </location>
    <ligand>
        <name>ATP</name>
        <dbReference type="ChEBI" id="CHEBI:30616"/>
        <label>1</label>
    </ligand>
</feature>
<feature type="binding site" evidence="1">
    <location>
        <position position="286"/>
    </location>
    <ligand>
        <name>ATP</name>
        <dbReference type="ChEBI" id="CHEBI:30616"/>
        <label>1</label>
    </ligand>
</feature>
<feature type="binding site" evidence="1">
    <location>
        <position position="286"/>
    </location>
    <ligand>
        <name>Mg(2+)</name>
        <dbReference type="ChEBI" id="CHEBI:18420"/>
        <label>1</label>
    </ligand>
</feature>
<feature type="binding site" evidence="1">
    <location>
        <position position="286"/>
    </location>
    <ligand>
        <name>Mn(2+)</name>
        <dbReference type="ChEBI" id="CHEBI:29035"/>
        <label>1</label>
    </ligand>
</feature>
<feature type="binding site" evidence="1">
    <location>
        <position position="300"/>
    </location>
    <ligand>
        <name>ATP</name>
        <dbReference type="ChEBI" id="CHEBI:30616"/>
        <label>1</label>
    </ligand>
</feature>
<feature type="binding site" evidence="1">
    <location>
        <position position="300"/>
    </location>
    <ligand>
        <name>Mg(2+)</name>
        <dbReference type="ChEBI" id="CHEBI:18420"/>
        <label>1</label>
    </ligand>
</feature>
<feature type="binding site" evidence="1">
    <location>
        <position position="300"/>
    </location>
    <ligand>
        <name>Mg(2+)</name>
        <dbReference type="ChEBI" id="CHEBI:18420"/>
        <label>2</label>
    </ligand>
</feature>
<feature type="binding site" evidence="1">
    <location>
        <position position="300"/>
    </location>
    <ligand>
        <name>Mn(2+)</name>
        <dbReference type="ChEBI" id="CHEBI:29035"/>
        <label>1</label>
    </ligand>
</feature>
<feature type="binding site" evidence="1">
    <location>
        <position position="300"/>
    </location>
    <ligand>
        <name>Mn(2+)</name>
        <dbReference type="ChEBI" id="CHEBI:29035"/>
        <label>2</label>
    </ligand>
</feature>
<feature type="binding site" evidence="1">
    <location>
        <position position="302"/>
    </location>
    <ligand>
        <name>Mg(2+)</name>
        <dbReference type="ChEBI" id="CHEBI:18420"/>
        <label>2</label>
    </ligand>
</feature>
<feature type="binding site" evidence="1">
    <location>
        <position position="302"/>
    </location>
    <ligand>
        <name>Mn(2+)</name>
        <dbReference type="ChEBI" id="CHEBI:29035"/>
        <label>2</label>
    </ligand>
</feature>
<feature type="binding site" evidence="1">
    <location>
        <position position="739"/>
    </location>
    <ligand>
        <name>ATP</name>
        <dbReference type="ChEBI" id="CHEBI:30616"/>
        <label>2</label>
    </ligand>
</feature>
<feature type="binding site" evidence="1">
    <location>
        <position position="778"/>
    </location>
    <ligand>
        <name>ATP</name>
        <dbReference type="ChEBI" id="CHEBI:30616"/>
        <label>2</label>
    </ligand>
</feature>
<feature type="binding site" evidence="1">
    <location>
        <position position="780"/>
    </location>
    <ligand>
        <name>ATP</name>
        <dbReference type="ChEBI" id="CHEBI:30616"/>
        <label>2</label>
    </ligand>
</feature>
<feature type="binding site" evidence="1">
    <location>
        <position position="785"/>
    </location>
    <ligand>
        <name>ATP</name>
        <dbReference type="ChEBI" id="CHEBI:30616"/>
        <label>2</label>
    </ligand>
</feature>
<feature type="binding site" evidence="1">
    <location>
        <position position="811"/>
    </location>
    <ligand>
        <name>ATP</name>
        <dbReference type="ChEBI" id="CHEBI:30616"/>
        <label>2</label>
    </ligand>
</feature>
<feature type="binding site" evidence="1">
    <location>
        <position position="812"/>
    </location>
    <ligand>
        <name>ATP</name>
        <dbReference type="ChEBI" id="CHEBI:30616"/>
        <label>2</label>
    </ligand>
</feature>
<feature type="binding site" evidence="1">
    <location>
        <position position="813"/>
    </location>
    <ligand>
        <name>ATP</name>
        <dbReference type="ChEBI" id="CHEBI:30616"/>
        <label>2</label>
    </ligand>
</feature>
<feature type="binding site" evidence="1">
    <location>
        <position position="814"/>
    </location>
    <ligand>
        <name>ATP</name>
        <dbReference type="ChEBI" id="CHEBI:30616"/>
        <label>2</label>
    </ligand>
</feature>
<feature type="binding site" evidence="1">
    <location>
        <position position="854"/>
    </location>
    <ligand>
        <name>ATP</name>
        <dbReference type="ChEBI" id="CHEBI:30616"/>
        <label>2</label>
    </ligand>
</feature>
<feature type="binding site" evidence="1">
    <location>
        <position position="854"/>
    </location>
    <ligand>
        <name>Mg(2+)</name>
        <dbReference type="ChEBI" id="CHEBI:18420"/>
        <label>3</label>
    </ligand>
</feature>
<feature type="binding site" evidence="1">
    <location>
        <position position="854"/>
    </location>
    <ligand>
        <name>Mn(2+)</name>
        <dbReference type="ChEBI" id="CHEBI:29035"/>
        <label>3</label>
    </ligand>
</feature>
<feature type="binding site" evidence="1">
    <location>
        <position position="871"/>
    </location>
    <ligand>
        <name>ATP</name>
        <dbReference type="ChEBI" id="CHEBI:30616"/>
        <label>2</label>
    </ligand>
</feature>
<feature type="binding site" evidence="1">
    <location>
        <position position="871"/>
    </location>
    <ligand>
        <name>Mg(2+)</name>
        <dbReference type="ChEBI" id="CHEBI:18420"/>
        <label>3</label>
    </ligand>
</feature>
<feature type="binding site" evidence="1">
    <location>
        <position position="871"/>
    </location>
    <ligand>
        <name>Mg(2+)</name>
        <dbReference type="ChEBI" id="CHEBI:18420"/>
        <label>4</label>
    </ligand>
</feature>
<feature type="binding site" evidence="1">
    <location>
        <position position="871"/>
    </location>
    <ligand>
        <name>Mn(2+)</name>
        <dbReference type="ChEBI" id="CHEBI:29035"/>
        <label>3</label>
    </ligand>
</feature>
<feature type="binding site" evidence="1">
    <location>
        <position position="871"/>
    </location>
    <ligand>
        <name>Mn(2+)</name>
        <dbReference type="ChEBI" id="CHEBI:29035"/>
        <label>4</label>
    </ligand>
</feature>
<feature type="binding site" evidence="1">
    <location>
        <position position="873"/>
    </location>
    <ligand>
        <name>Mg(2+)</name>
        <dbReference type="ChEBI" id="CHEBI:18420"/>
        <label>4</label>
    </ligand>
</feature>
<feature type="binding site" evidence="1">
    <location>
        <position position="873"/>
    </location>
    <ligand>
        <name>Mn(2+)</name>
        <dbReference type="ChEBI" id="CHEBI:29035"/>
        <label>4</label>
    </ligand>
</feature>
<organism>
    <name type="scientific">Nostoc sp. (strain PCC 7120 / SAG 25.82 / UTEX 2576)</name>
    <dbReference type="NCBI Taxonomy" id="103690"/>
    <lineage>
        <taxon>Bacteria</taxon>
        <taxon>Bacillati</taxon>
        <taxon>Cyanobacteriota</taxon>
        <taxon>Cyanophyceae</taxon>
        <taxon>Nostocales</taxon>
        <taxon>Nostocaceae</taxon>
        <taxon>Nostoc</taxon>
    </lineage>
</organism>
<name>CARB_NOSS1</name>
<comment type="function">
    <text evidence="1">Large subunit of the glutamine-dependent carbamoyl phosphate synthetase (CPSase). CPSase catalyzes the formation of carbamoyl phosphate from the ammonia moiety of glutamine, carbonate, and phosphate donated by ATP, constituting the first step of 2 biosynthetic pathways, one leading to arginine and/or urea and the other to pyrimidine nucleotides. The large subunit (synthetase) binds the substrates ammonia (free or transferred from glutamine from the small subunit), hydrogencarbonate and ATP and carries out an ATP-coupled ligase reaction, activating hydrogencarbonate by forming carboxy phosphate which reacts with ammonia to form carbamoyl phosphate.</text>
</comment>
<comment type="catalytic activity">
    <reaction evidence="1">
        <text>hydrogencarbonate + L-glutamine + 2 ATP + H2O = carbamoyl phosphate + L-glutamate + 2 ADP + phosphate + 2 H(+)</text>
        <dbReference type="Rhea" id="RHEA:18633"/>
        <dbReference type="ChEBI" id="CHEBI:15377"/>
        <dbReference type="ChEBI" id="CHEBI:15378"/>
        <dbReference type="ChEBI" id="CHEBI:17544"/>
        <dbReference type="ChEBI" id="CHEBI:29985"/>
        <dbReference type="ChEBI" id="CHEBI:30616"/>
        <dbReference type="ChEBI" id="CHEBI:43474"/>
        <dbReference type="ChEBI" id="CHEBI:58228"/>
        <dbReference type="ChEBI" id="CHEBI:58359"/>
        <dbReference type="ChEBI" id="CHEBI:456216"/>
        <dbReference type="EC" id="6.3.5.5"/>
    </reaction>
</comment>
<comment type="catalytic activity">
    <molecule>Carbamoyl phosphate synthase large chain</molecule>
    <reaction evidence="1">
        <text>hydrogencarbonate + NH4(+) + 2 ATP = carbamoyl phosphate + 2 ADP + phosphate + 2 H(+)</text>
        <dbReference type="Rhea" id="RHEA:18029"/>
        <dbReference type="ChEBI" id="CHEBI:15378"/>
        <dbReference type="ChEBI" id="CHEBI:17544"/>
        <dbReference type="ChEBI" id="CHEBI:28938"/>
        <dbReference type="ChEBI" id="CHEBI:30616"/>
        <dbReference type="ChEBI" id="CHEBI:43474"/>
        <dbReference type="ChEBI" id="CHEBI:58228"/>
        <dbReference type="ChEBI" id="CHEBI:456216"/>
        <dbReference type="EC" id="6.3.4.16"/>
    </reaction>
</comment>
<comment type="cofactor">
    <cofactor evidence="1">
        <name>Mg(2+)</name>
        <dbReference type="ChEBI" id="CHEBI:18420"/>
    </cofactor>
    <cofactor evidence="1">
        <name>Mn(2+)</name>
        <dbReference type="ChEBI" id="CHEBI:29035"/>
    </cofactor>
    <text evidence="1">Binds 4 Mg(2+) or Mn(2+) ions per subunit.</text>
</comment>
<comment type="pathway">
    <text evidence="1">Amino-acid biosynthesis; L-arginine biosynthesis; carbamoyl phosphate from bicarbonate: step 1/1.</text>
</comment>
<comment type="pathway">
    <text evidence="1">Pyrimidine metabolism; UMP biosynthesis via de novo pathway; (S)-dihydroorotate from bicarbonate: step 1/3.</text>
</comment>
<comment type="subunit">
    <text evidence="1">Composed of two chains; the small (or glutamine) chain promotes the hydrolysis of glutamine to ammonia, which is used by the large (or ammonia) chain to synthesize carbamoyl phosphate. Tetramer of heterodimers (alpha,beta)4.</text>
</comment>
<comment type="domain">
    <text evidence="1">The large subunit is composed of 2 ATP-grasp domains that are involved in binding the 2 ATP molecules needed for carbamoyl phosphate synthesis. The N-terminal ATP-grasp domain (referred to as the carboxyphosphate synthetic component) catalyzes the ATP-dependent phosphorylation of hydrogencarbonate to carboxyphosphate and the subsequent nucleophilic attack by ammonia to form a carbamate intermediate. The C-terminal ATP-grasp domain (referred to as the carbamoyl phosphate synthetic component) then catalyzes the phosphorylation of carbamate with the second ATP to form the end product carbamoyl phosphate. The reactive and unstable enzyme intermediates are sequentially channeled from one active site to the next through the interior of the protein over a distance of at least 96 A.</text>
</comment>
<comment type="similarity">
    <text evidence="1">Belongs to the CarB family.</text>
</comment>
<keyword id="KW-0028">Amino-acid biosynthesis</keyword>
<keyword id="KW-0055">Arginine biosynthesis</keyword>
<keyword id="KW-0067">ATP-binding</keyword>
<keyword id="KW-0436">Ligase</keyword>
<keyword id="KW-0460">Magnesium</keyword>
<keyword id="KW-0464">Manganese</keyword>
<keyword id="KW-0479">Metal-binding</keyword>
<keyword id="KW-0547">Nucleotide-binding</keyword>
<keyword id="KW-0665">Pyrimidine biosynthesis</keyword>
<keyword id="KW-1185">Reference proteome</keyword>
<keyword id="KW-0677">Repeat</keyword>
<reference key="1">
    <citation type="journal article" date="2001" name="DNA Res.">
        <title>Complete genomic sequence of the filamentous nitrogen-fixing cyanobacterium Anabaena sp. strain PCC 7120.</title>
        <authorList>
            <person name="Kaneko T."/>
            <person name="Nakamura Y."/>
            <person name="Wolk C.P."/>
            <person name="Kuritz T."/>
            <person name="Sasamoto S."/>
            <person name="Watanabe A."/>
            <person name="Iriguchi M."/>
            <person name="Ishikawa A."/>
            <person name="Kawashima K."/>
            <person name="Kimura T."/>
            <person name="Kishida Y."/>
            <person name="Kohara M."/>
            <person name="Matsumoto M."/>
            <person name="Matsuno A."/>
            <person name="Muraki A."/>
            <person name="Nakazaki N."/>
            <person name="Shimpo S."/>
            <person name="Sugimoto M."/>
            <person name="Takazawa M."/>
            <person name="Yamada M."/>
            <person name="Yasuda M."/>
            <person name="Tabata S."/>
        </authorList>
    </citation>
    <scope>NUCLEOTIDE SEQUENCE [LARGE SCALE GENOMIC DNA]</scope>
    <source>
        <strain>PCC 7120 / SAG 25.82 / UTEX 2576</strain>
    </source>
</reference>
<gene>
    <name evidence="1" type="primary">carB</name>
    <name type="ordered locus">alr3809</name>
</gene>
<dbReference type="EC" id="6.3.4.16" evidence="1"/>
<dbReference type="EC" id="6.3.5.5" evidence="1"/>
<dbReference type="EMBL" id="BA000019">
    <property type="protein sequence ID" value="BAB75508.1"/>
    <property type="molecule type" value="Genomic_DNA"/>
</dbReference>
<dbReference type="PIR" id="AB2282">
    <property type="entry name" value="AB2282"/>
</dbReference>
<dbReference type="RefSeq" id="WP_010997950.1">
    <property type="nucleotide sequence ID" value="NZ_RSCN01000011.1"/>
</dbReference>
<dbReference type="SMR" id="Q8YQL2"/>
<dbReference type="STRING" id="103690.gene:10495851"/>
<dbReference type="KEGG" id="ana:alr3809"/>
<dbReference type="eggNOG" id="COG0458">
    <property type="taxonomic scope" value="Bacteria"/>
</dbReference>
<dbReference type="OrthoDB" id="9804197at2"/>
<dbReference type="UniPathway" id="UPA00068">
    <property type="reaction ID" value="UER00171"/>
</dbReference>
<dbReference type="UniPathway" id="UPA00070">
    <property type="reaction ID" value="UER00115"/>
</dbReference>
<dbReference type="Proteomes" id="UP000002483">
    <property type="component" value="Chromosome"/>
</dbReference>
<dbReference type="GO" id="GO:0005737">
    <property type="term" value="C:cytoplasm"/>
    <property type="evidence" value="ECO:0007669"/>
    <property type="project" value="TreeGrafter"/>
</dbReference>
<dbReference type="GO" id="GO:0005524">
    <property type="term" value="F:ATP binding"/>
    <property type="evidence" value="ECO:0007669"/>
    <property type="project" value="UniProtKB-UniRule"/>
</dbReference>
<dbReference type="GO" id="GO:0004087">
    <property type="term" value="F:carbamoyl-phosphate synthase (ammonia) activity"/>
    <property type="evidence" value="ECO:0007669"/>
    <property type="project" value="RHEA"/>
</dbReference>
<dbReference type="GO" id="GO:0004088">
    <property type="term" value="F:carbamoyl-phosphate synthase (glutamine-hydrolyzing) activity"/>
    <property type="evidence" value="ECO:0007669"/>
    <property type="project" value="UniProtKB-UniRule"/>
</dbReference>
<dbReference type="GO" id="GO:0046872">
    <property type="term" value="F:metal ion binding"/>
    <property type="evidence" value="ECO:0007669"/>
    <property type="project" value="UniProtKB-KW"/>
</dbReference>
<dbReference type="GO" id="GO:0044205">
    <property type="term" value="P:'de novo' UMP biosynthetic process"/>
    <property type="evidence" value="ECO:0007669"/>
    <property type="project" value="UniProtKB-UniRule"/>
</dbReference>
<dbReference type="GO" id="GO:0006541">
    <property type="term" value="P:glutamine metabolic process"/>
    <property type="evidence" value="ECO:0007669"/>
    <property type="project" value="TreeGrafter"/>
</dbReference>
<dbReference type="GO" id="GO:0006526">
    <property type="term" value="P:L-arginine biosynthetic process"/>
    <property type="evidence" value="ECO:0007669"/>
    <property type="project" value="UniProtKB-UniRule"/>
</dbReference>
<dbReference type="CDD" id="cd01424">
    <property type="entry name" value="MGS_CPS_II"/>
    <property type="match status" value="1"/>
</dbReference>
<dbReference type="FunFam" id="1.10.1030.10:FF:000002">
    <property type="entry name" value="Carbamoyl-phosphate synthase large chain"/>
    <property type="match status" value="1"/>
</dbReference>
<dbReference type="FunFam" id="3.30.1490.20:FF:000001">
    <property type="entry name" value="Carbamoyl-phosphate synthase large chain"/>
    <property type="match status" value="1"/>
</dbReference>
<dbReference type="FunFam" id="3.30.470.20:FF:000007">
    <property type="entry name" value="Carbamoyl-phosphate synthase large chain"/>
    <property type="match status" value="1"/>
</dbReference>
<dbReference type="FunFam" id="3.30.470.20:FF:000013">
    <property type="entry name" value="Carbamoyl-phosphate synthase large chain"/>
    <property type="match status" value="1"/>
</dbReference>
<dbReference type="FunFam" id="3.40.50.20:FF:000001">
    <property type="entry name" value="Carbamoyl-phosphate synthase large chain"/>
    <property type="match status" value="1"/>
</dbReference>
<dbReference type="FunFam" id="3.40.50.20:FF:000003">
    <property type="entry name" value="Carbamoyl-phosphate synthase large chain"/>
    <property type="match status" value="1"/>
</dbReference>
<dbReference type="Gene3D" id="3.40.50.20">
    <property type="match status" value="2"/>
</dbReference>
<dbReference type="Gene3D" id="3.30.470.20">
    <property type="entry name" value="ATP-grasp fold, B domain"/>
    <property type="match status" value="2"/>
</dbReference>
<dbReference type="Gene3D" id="1.10.1030.10">
    <property type="entry name" value="Carbamoyl-phosphate synthetase, large subunit oligomerisation domain"/>
    <property type="match status" value="1"/>
</dbReference>
<dbReference type="Gene3D" id="3.40.50.1380">
    <property type="entry name" value="Methylglyoxal synthase-like domain"/>
    <property type="match status" value="1"/>
</dbReference>
<dbReference type="HAMAP" id="MF_01210_A">
    <property type="entry name" value="CPSase_L_chain_A"/>
    <property type="match status" value="1"/>
</dbReference>
<dbReference type="HAMAP" id="MF_01210_B">
    <property type="entry name" value="CPSase_L_chain_B"/>
    <property type="match status" value="1"/>
</dbReference>
<dbReference type="InterPro" id="IPR011761">
    <property type="entry name" value="ATP-grasp"/>
</dbReference>
<dbReference type="InterPro" id="IPR006275">
    <property type="entry name" value="CarbamoylP_synth_lsu"/>
</dbReference>
<dbReference type="InterPro" id="IPR005480">
    <property type="entry name" value="CarbamoylP_synth_lsu_oligo"/>
</dbReference>
<dbReference type="InterPro" id="IPR036897">
    <property type="entry name" value="CarbamoylP_synth_lsu_oligo_sf"/>
</dbReference>
<dbReference type="InterPro" id="IPR005479">
    <property type="entry name" value="CbamoylP_synth_lsu-like_ATP-bd"/>
</dbReference>
<dbReference type="InterPro" id="IPR005483">
    <property type="entry name" value="CbamoylP_synth_lsu_CPSase_dom"/>
</dbReference>
<dbReference type="InterPro" id="IPR011607">
    <property type="entry name" value="MGS-like_dom"/>
</dbReference>
<dbReference type="InterPro" id="IPR036914">
    <property type="entry name" value="MGS-like_dom_sf"/>
</dbReference>
<dbReference type="InterPro" id="IPR033937">
    <property type="entry name" value="MGS_CPS_CarB"/>
</dbReference>
<dbReference type="InterPro" id="IPR016185">
    <property type="entry name" value="PreATP-grasp_dom_sf"/>
</dbReference>
<dbReference type="NCBIfam" id="TIGR01369">
    <property type="entry name" value="CPSaseII_lrg"/>
    <property type="match status" value="1"/>
</dbReference>
<dbReference type="NCBIfam" id="NF003671">
    <property type="entry name" value="PRK05294.1"/>
    <property type="match status" value="1"/>
</dbReference>
<dbReference type="NCBIfam" id="NF009455">
    <property type="entry name" value="PRK12815.1"/>
    <property type="match status" value="1"/>
</dbReference>
<dbReference type="PANTHER" id="PTHR11405:SF53">
    <property type="entry name" value="CARBAMOYL-PHOSPHATE SYNTHASE [AMMONIA], MITOCHONDRIAL"/>
    <property type="match status" value="1"/>
</dbReference>
<dbReference type="PANTHER" id="PTHR11405">
    <property type="entry name" value="CARBAMOYLTRANSFERASE FAMILY MEMBER"/>
    <property type="match status" value="1"/>
</dbReference>
<dbReference type="Pfam" id="PF02786">
    <property type="entry name" value="CPSase_L_D2"/>
    <property type="match status" value="2"/>
</dbReference>
<dbReference type="Pfam" id="PF02787">
    <property type="entry name" value="CPSase_L_D3"/>
    <property type="match status" value="1"/>
</dbReference>
<dbReference type="Pfam" id="PF02142">
    <property type="entry name" value="MGS"/>
    <property type="match status" value="1"/>
</dbReference>
<dbReference type="PRINTS" id="PR00098">
    <property type="entry name" value="CPSASE"/>
</dbReference>
<dbReference type="SMART" id="SM01096">
    <property type="entry name" value="CPSase_L_D3"/>
    <property type="match status" value="1"/>
</dbReference>
<dbReference type="SMART" id="SM00851">
    <property type="entry name" value="MGS"/>
    <property type="match status" value="1"/>
</dbReference>
<dbReference type="SUPFAM" id="SSF48108">
    <property type="entry name" value="Carbamoyl phosphate synthetase, large subunit connection domain"/>
    <property type="match status" value="1"/>
</dbReference>
<dbReference type="SUPFAM" id="SSF56059">
    <property type="entry name" value="Glutathione synthetase ATP-binding domain-like"/>
    <property type="match status" value="2"/>
</dbReference>
<dbReference type="SUPFAM" id="SSF52335">
    <property type="entry name" value="Methylglyoxal synthase-like"/>
    <property type="match status" value="1"/>
</dbReference>
<dbReference type="SUPFAM" id="SSF52440">
    <property type="entry name" value="PreATP-grasp domain"/>
    <property type="match status" value="2"/>
</dbReference>
<dbReference type="PROSITE" id="PS50975">
    <property type="entry name" value="ATP_GRASP"/>
    <property type="match status" value="2"/>
</dbReference>
<dbReference type="PROSITE" id="PS00866">
    <property type="entry name" value="CPSASE_1"/>
    <property type="match status" value="2"/>
</dbReference>
<dbReference type="PROSITE" id="PS00867">
    <property type="entry name" value="CPSASE_2"/>
    <property type="match status" value="2"/>
</dbReference>
<dbReference type="PROSITE" id="PS51855">
    <property type="entry name" value="MGS"/>
    <property type="match status" value="1"/>
</dbReference>
<accession>Q8YQL2</accession>
<sequence length="1104" mass="121157">MPRRQDIQKILLLGSGPIVIGQACEFDYSGTQACKALREEGYEVVLVNSNPATIMTDPETADRTYIEPLTPELVEKVIARERPDALLPTMGGQTALNIAVALAKNGVLDQYNVELIGAKLPAIEKAEDRKLFNEAMDKIGVKVCPSGTASSLDESKAIARRIGTYPLIIRPAFTMGGTGGGIAYNQEEFEEMAQVGIDASPVSQILIDQSLLGWKEYELEVMRDLADNVVIICSIENIDPMGIHTGDSITVAPAQTLTDKEYQRLRDMAIKIIREIGVETGGSNIQFAVNPVNGDVVVIEMNPRVSRSSALSSKATGFPIAKMAAKLAVGYTLDEIRNDITKKTPASFEPTIDYVVTKVPRFAFEKFPGSEPVLTTQMKSVGEAMAIGRTFNESFQKALRSLETGRAGWGCDKAEKLPSGEQIRAQLRTPNPDRIFAVRHALQLGMSPEEIYELTAIDPWFLDKMQQLLEVEKFLKRTPLKQLTREQMYAVKRDGYSDRQIAFATKTTEDEVRAYRKELGVTPVYKTVDTCAAEFEAFTPYYYSTYEEETEVIPASKPKVMILGGGPNRIGQGIEFDYCCCHAAYALKGAGYETIMVNSNPETVSTDYDTSDRLYFEPLTKEDVLNIIEAENPVGIIVQFGGQTPLKLALPLQDYLRQVGNGSLVIGNGNEETAITDDQLPITKIWGTSPDSIDSAEDRERFEKILQKLNISQPPNGIARSYEDALIVAKRIGYPVVVRPSYVLGGRAMEIVYSDTELERYMTFAVQVEPEHPILIDKFLENAIEVDVDAIADHTGRVVIGGIMEHIEQAGIHSGDSACSLPSISLPPAVLNQIRTWTVQLAQELSVVGLMNIQFAVIGASSYSPQVYILEANPRASRTVPFVSKATGVPLAKLASLIMSGKTLEELNFTQEVIPSHIAVKEAVLPFNKFPGTDTILGPEMRSTGEVMGIDSDFGRAFAKAELGAGERLPLTGTVFVSMSDRDKSAAVPVVREFIDLGFKVMATFGTRRVLLENGLNVELVLKLHEGRPHVIDAIKNQKIQLIINTPSGEEAQTDARLIRRTGLAYKIPIITTIAGAKATVAAIRSMQNTTLDVKTIQEYCPNF</sequence>
<proteinExistence type="inferred from homology"/>
<protein>
    <recommendedName>
        <fullName evidence="1">Carbamoyl phosphate synthase large chain</fullName>
        <ecNumber evidence="1">6.3.4.16</ecNumber>
        <ecNumber evidence="1">6.3.5.5</ecNumber>
    </recommendedName>
    <alternativeName>
        <fullName evidence="1">Carbamoyl phosphate synthetase ammonia chain</fullName>
    </alternativeName>
</protein>